<name>XPO4_DANRE</name>
<keyword id="KW-0963">Cytoplasm</keyword>
<keyword id="KW-0539">Nucleus</keyword>
<keyword id="KW-0653">Protein transport</keyword>
<keyword id="KW-1185">Reference proteome</keyword>
<keyword id="KW-0813">Transport</keyword>
<gene>
    <name type="primary">xpo4</name>
    <name type="ORF">zgc:55678</name>
</gene>
<evidence type="ECO:0000250" key="1"/>
<evidence type="ECO:0000305" key="2"/>
<comment type="function">
    <text evidence="1">Mediates the nuclear export of proteins (cargos) with broad substrate specificity.</text>
</comment>
<comment type="subcellular location">
    <subcellularLocation>
        <location evidence="1">Cytoplasm</location>
    </subcellularLocation>
    <subcellularLocation>
        <location evidence="1">Nucleus</location>
    </subcellularLocation>
</comment>
<comment type="similarity">
    <text evidence="2">Belongs to the exportin family.</text>
</comment>
<proteinExistence type="evidence at transcript level"/>
<feature type="chain" id="PRO_0000237671" description="Exportin-4">
    <location>
        <begin position="1"/>
        <end position="1150"/>
    </location>
</feature>
<reference key="1">
    <citation type="submission" date="2003-03" db="EMBL/GenBank/DDBJ databases">
        <authorList>
            <consortium name="NIH - Zebrafish Gene Collection (ZGC) project"/>
        </authorList>
    </citation>
    <scope>NUCLEOTIDE SEQUENCE [LARGE SCALE MRNA]</scope>
    <source>
        <strain>AB</strain>
    </source>
</reference>
<accession>Q802D3</accession>
<organism>
    <name type="scientific">Danio rerio</name>
    <name type="common">Zebrafish</name>
    <name type="synonym">Brachydanio rerio</name>
    <dbReference type="NCBI Taxonomy" id="7955"/>
    <lineage>
        <taxon>Eukaryota</taxon>
        <taxon>Metazoa</taxon>
        <taxon>Chordata</taxon>
        <taxon>Craniata</taxon>
        <taxon>Vertebrata</taxon>
        <taxon>Euteleostomi</taxon>
        <taxon>Actinopterygii</taxon>
        <taxon>Neopterygii</taxon>
        <taxon>Teleostei</taxon>
        <taxon>Ostariophysi</taxon>
        <taxon>Cypriniformes</taxon>
        <taxon>Danionidae</taxon>
        <taxon>Danioninae</taxon>
        <taxon>Danio</taxon>
    </lineage>
</organism>
<dbReference type="EMBL" id="BC048882">
    <property type="protein sequence ID" value="AAH48882.1"/>
    <property type="molecule type" value="mRNA"/>
</dbReference>
<dbReference type="RefSeq" id="NP_997839.1">
    <property type="nucleotide sequence ID" value="NM_212674.2"/>
</dbReference>
<dbReference type="SMR" id="Q802D3"/>
<dbReference type="FunCoup" id="Q802D3">
    <property type="interactions" value="1192"/>
</dbReference>
<dbReference type="STRING" id="7955.ENSDARP00000112894"/>
<dbReference type="PaxDb" id="7955-ENSDARP00000005176"/>
<dbReference type="PeptideAtlas" id="Q802D3"/>
<dbReference type="GeneID" id="324342"/>
<dbReference type="KEGG" id="dre:324342"/>
<dbReference type="AGR" id="ZFIN:ZDB-GENE-030131-3062"/>
<dbReference type="CTD" id="64328"/>
<dbReference type="ZFIN" id="ZDB-GENE-030131-3062">
    <property type="gene designation" value="xpo4"/>
</dbReference>
<dbReference type="eggNOG" id="KOG4541">
    <property type="taxonomic scope" value="Eukaryota"/>
</dbReference>
<dbReference type="InParanoid" id="Q802D3"/>
<dbReference type="OrthoDB" id="5548448at2759"/>
<dbReference type="PhylomeDB" id="Q802D3"/>
<dbReference type="PRO" id="PR:Q802D3"/>
<dbReference type="Proteomes" id="UP000000437">
    <property type="component" value="Alternate scaffold 9"/>
</dbReference>
<dbReference type="Proteomes" id="UP000000437">
    <property type="component" value="Chromosome 9"/>
</dbReference>
<dbReference type="GO" id="GO:0005737">
    <property type="term" value="C:cytoplasm"/>
    <property type="evidence" value="ECO:0000318"/>
    <property type="project" value="GO_Central"/>
</dbReference>
<dbReference type="GO" id="GO:0005643">
    <property type="term" value="C:nuclear pore"/>
    <property type="evidence" value="ECO:0000318"/>
    <property type="project" value="GO_Central"/>
</dbReference>
<dbReference type="GO" id="GO:0005049">
    <property type="term" value="F:nuclear export signal receptor activity"/>
    <property type="evidence" value="ECO:0000318"/>
    <property type="project" value="GO_Central"/>
</dbReference>
<dbReference type="GO" id="GO:0006611">
    <property type="term" value="P:protein export from nucleus"/>
    <property type="evidence" value="ECO:0000318"/>
    <property type="project" value="GO_Central"/>
</dbReference>
<dbReference type="FunFam" id="1.25.10.10:FF:000077">
    <property type="entry name" value="Exportin 4"/>
    <property type="match status" value="1"/>
</dbReference>
<dbReference type="FunFam" id="1.25.10.10:FF:000130">
    <property type="entry name" value="Exportin 4"/>
    <property type="match status" value="1"/>
</dbReference>
<dbReference type="Gene3D" id="1.25.10.10">
    <property type="entry name" value="Leucine-rich Repeat Variant"/>
    <property type="match status" value="2"/>
</dbReference>
<dbReference type="InterPro" id="IPR011989">
    <property type="entry name" value="ARM-like"/>
</dbReference>
<dbReference type="InterPro" id="IPR016024">
    <property type="entry name" value="ARM-type_fold"/>
</dbReference>
<dbReference type="InterPro" id="IPR014877">
    <property type="entry name" value="XPO1_C_dom"/>
</dbReference>
<dbReference type="InterPro" id="IPR044189">
    <property type="entry name" value="XPO4/7-like"/>
</dbReference>
<dbReference type="PANTHER" id="PTHR12596">
    <property type="entry name" value="EXPORTIN 4,7-RELATED"/>
    <property type="match status" value="1"/>
</dbReference>
<dbReference type="PANTHER" id="PTHR12596:SF1">
    <property type="entry name" value="EXPORTIN-4"/>
    <property type="match status" value="1"/>
</dbReference>
<dbReference type="Pfam" id="PF08767">
    <property type="entry name" value="CRM1_C"/>
    <property type="match status" value="1"/>
</dbReference>
<dbReference type="SUPFAM" id="SSF48371">
    <property type="entry name" value="ARM repeat"/>
    <property type="match status" value="1"/>
</dbReference>
<sequence>MMAAVGAPEVISQLESAAKVLMAPPSMVSTEQRQHAEHIFLSFRKSKSPFAVCKHILETSKVDYVLFQAATAIMEAVVREWILLEKNSIESLRTFLLTYVLQRPNLQKYVREQILLAVAVIVKRGSLDKSINCKSIFLEVSQLISSGNPTVQTLACSILTALLSEFSSSNKTSNIGLSMEFHGSCKRIFQEDDLRQIFMLTMEVLQEFSRRENLNAQMSCVFQRYLALANQVLSWNFLPPNLGRHYIAMFEATPNVMLKPTESWRESLLDHRVMDLFFTVHRKIREDSDMAQDSLQCLAQLASMQGPIFPDESAQVTYLAHLVEGLLNMINGIEIEDSEAVGISNIISNLISTFSRSVLTALPNVLFASFINCLTLLTCSFGRSAALEEVLDKDDMVYMEAYDKLLESWLTLVQEDEHFPRGCFVQPAVQVFNSYIQCHLAAPDGTRNLTANGVASHEEEEINELQEDDRELFSDQLASIGMLGRIAADHCIPLLTGLLEDRVTRLHGQLQRHQQHLMAAADPDTVDRKVLDDLYEDIHWLILVSGYLLADVPQGETPLIPSEVMEYSIKHSTEVDINTTLQLLGSPGEKATSIPGCNRTDSVIRLLSAVLRTSEVESRATRASLTQLLSPQMGKDIVWFLRRWAKTYLLVDEKLYGQISMPLSTAFGADTEGAQWIVGYLLEKVINNLSVWSSEPELANDTVELLVTLVEKRERANIVVQCENWWSLAKQFASRSPPLHMLSSTVQRTLMKALVLGGFAHMDSDTKQQYWAEVLHPLQQRFLNLINQENFAQICQEVAVKQEIVATLEALCGIAEATQIDNVASLFSFLMDFLSSCIGLMEVYRNSPETVNLIIEVFVEVAHKQICYLGETKSMKLYEVCLTLLQVYSKNNLGRKRLDVAAEEDQYQDLLLIMELLTNLLSKEFIDFSDTDEVLRGQEQSSGAGRAVSAADVVLYGVNIVLPLMSQDLLKFPSLCNQYYKLITFICEIFPEKIPQLPEELFKSLMCSLELGMTSMSSEISQLCLEALSPLAEQCAKTQEKDTPLFIATRHFLKLVFDMLVLQKHNTEMTVAAGEALYTLVCLHQAEYSELVETLLSNQRDALIYQRLADAFNNLTASSTPPTMDRKQKVAFLKSLEEFVANVGGLLCVK</sequence>
<protein>
    <recommendedName>
        <fullName>Exportin-4</fullName>
    </recommendedName>
</protein>